<evidence type="ECO:0000255" key="1">
    <source>
        <dbReference type="HAMAP-Rule" id="MF_00176"/>
    </source>
</evidence>
<protein>
    <recommendedName>
        <fullName evidence="1">Serine--tRNA ligase</fullName>
        <ecNumber evidence="1">6.1.1.11</ecNumber>
    </recommendedName>
    <alternativeName>
        <fullName evidence="1">Seryl-tRNA synthetase</fullName>
        <shortName evidence="1">SerRS</shortName>
    </alternativeName>
    <alternativeName>
        <fullName evidence="1">Seryl-tRNA(Ser/Sec) synthetase</fullName>
    </alternativeName>
</protein>
<name>SYS_CHRVO</name>
<reference key="1">
    <citation type="journal article" date="2003" name="Proc. Natl. Acad. Sci. U.S.A.">
        <title>The complete genome sequence of Chromobacterium violaceum reveals remarkable and exploitable bacterial adaptability.</title>
        <authorList>
            <person name="Vasconcelos A.T.R."/>
            <person name="de Almeida D.F."/>
            <person name="Hungria M."/>
            <person name="Guimaraes C.T."/>
            <person name="Antonio R.V."/>
            <person name="Almeida F.C."/>
            <person name="de Almeida L.G.P."/>
            <person name="de Almeida R."/>
            <person name="Alves-Gomes J.A."/>
            <person name="Andrade E.M."/>
            <person name="Araripe J."/>
            <person name="de Araujo M.F.F."/>
            <person name="Astolfi-Filho S."/>
            <person name="Azevedo V."/>
            <person name="Baptista A.J."/>
            <person name="Bataus L.A.M."/>
            <person name="Batista J.S."/>
            <person name="Belo A."/>
            <person name="van den Berg C."/>
            <person name="Bogo M."/>
            <person name="Bonatto S."/>
            <person name="Bordignon J."/>
            <person name="Brigido M.M."/>
            <person name="Brito C.A."/>
            <person name="Brocchi M."/>
            <person name="Burity H.A."/>
            <person name="Camargo A.A."/>
            <person name="Cardoso D.D.P."/>
            <person name="Carneiro N.P."/>
            <person name="Carraro D.M."/>
            <person name="Carvalho C.M.B."/>
            <person name="Cascardo J.C.M."/>
            <person name="Cavada B.S."/>
            <person name="Chueire L.M.O."/>
            <person name="Creczynski-Pasa T.B."/>
            <person name="Cunha-Junior N.C."/>
            <person name="Fagundes N."/>
            <person name="Falcao C.L."/>
            <person name="Fantinatti F."/>
            <person name="Farias I.P."/>
            <person name="Felipe M.S.S."/>
            <person name="Ferrari L.P."/>
            <person name="Ferro J.A."/>
            <person name="Ferro M.I.T."/>
            <person name="Franco G.R."/>
            <person name="Freitas N.S.A."/>
            <person name="Furlan L.R."/>
            <person name="Gazzinelli R.T."/>
            <person name="Gomes E.A."/>
            <person name="Goncalves P.R."/>
            <person name="Grangeiro T.B."/>
            <person name="Grattapaglia D."/>
            <person name="Grisard E.C."/>
            <person name="Hanna E.S."/>
            <person name="Jardim S.N."/>
            <person name="Laurino J."/>
            <person name="Leoi L.C.T."/>
            <person name="Lima L.F.A."/>
            <person name="Loureiro M.F."/>
            <person name="Lyra M.C.C.P."/>
            <person name="Madeira H.M.F."/>
            <person name="Manfio G.P."/>
            <person name="Maranhao A.Q."/>
            <person name="Martins W.S."/>
            <person name="di Mauro S.M.Z."/>
            <person name="de Medeiros S.R.B."/>
            <person name="Meissner R.V."/>
            <person name="Moreira M.A.M."/>
            <person name="Nascimento F.F."/>
            <person name="Nicolas M.F."/>
            <person name="Oliveira J.G."/>
            <person name="Oliveira S.C."/>
            <person name="Paixao R.F.C."/>
            <person name="Parente J.A."/>
            <person name="Pedrosa F.O."/>
            <person name="Pena S.D.J."/>
            <person name="Pereira J.O."/>
            <person name="Pereira M."/>
            <person name="Pinto L.S.R.C."/>
            <person name="Pinto L.S."/>
            <person name="Porto J.I.R."/>
            <person name="Potrich D.P."/>
            <person name="Ramalho-Neto C.E."/>
            <person name="Reis A.M.M."/>
            <person name="Rigo L.U."/>
            <person name="Rondinelli E."/>
            <person name="Santos E.B.P."/>
            <person name="Santos F.R."/>
            <person name="Schneider M.P.C."/>
            <person name="Seuanez H.N."/>
            <person name="Silva A.M.R."/>
            <person name="da Silva A.L.C."/>
            <person name="Silva D.W."/>
            <person name="Silva R."/>
            <person name="Simoes I.C."/>
            <person name="Simon D."/>
            <person name="Soares C.M.A."/>
            <person name="Soares R.B.A."/>
            <person name="Souza E.M."/>
            <person name="Souza K.R.L."/>
            <person name="Souza R.C."/>
            <person name="Steffens M.B.R."/>
            <person name="Steindel M."/>
            <person name="Teixeira S.R."/>
            <person name="Urmenyi T."/>
            <person name="Vettore A."/>
            <person name="Wassem R."/>
            <person name="Zaha A."/>
            <person name="Simpson A.J.G."/>
        </authorList>
    </citation>
    <scope>NUCLEOTIDE SEQUENCE [LARGE SCALE GENOMIC DNA]</scope>
    <source>
        <strain>ATCC 12472 / DSM 30191 / JCM 1249 / CCUG 213 / NBRC 12614 / NCIMB 9131 / NCTC 9757 / MK</strain>
    </source>
</reference>
<comment type="function">
    <text evidence="1">Catalyzes the attachment of serine to tRNA(Ser). Is also able to aminoacylate tRNA(Sec) with serine, to form the misacylated tRNA L-seryl-tRNA(Sec), which will be further converted into selenocysteinyl-tRNA(Sec).</text>
</comment>
<comment type="catalytic activity">
    <reaction evidence="1">
        <text>tRNA(Ser) + L-serine + ATP = L-seryl-tRNA(Ser) + AMP + diphosphate + H(+)</text>
        <dbReference type="Rhea" id="RHEA:12292"/>
        <dbReference type="Rhea" id="RHEA-COMP:9669"/>
        <dbReference type="Rhea" id="RHEA-COMP:9703"/>
        <dbReference type="ChEBI" id="CHEBI:15378"/>
        <dbReference type="ChEBI" id="CHEBI:30616"/>
        <dbReference type="ChEBI" id="CHEBI:33019"/>
        <dbReference type="ChEBI" id="CHEBI:33384"/>
        <dbReference type="ChEBI" id="CHEBI:78442"/>
        <dbReference type="ChEBI" id="CHEBI:78533"/>
        <dbReference type="ChEBI" id="CHEBI:456215"/>
        <dbReference type="EC" id="6.1.1.11"/>
    </reaction>
</comment>
<comment type="catalytic activity">
    <reaction evidence="1">
        <text>tRNA(Sec) + L-serine + ATP = L-seryl-tRNA(Sec) + AMP + diphosphate + H(+)</text>
        <dbReference type="Rhea" id="RHEA:42580"/>
        <dbReference type="Rhea" id="RHEA-COMP:9742"/>
        <dbReference type="Rhea" id="RHEA-COMP:10128"/>
        <dbReference type="ChEBI" id="CHEBI:15378"/>
        <dbReference type="ChEBI" id="CHEBI:30616"/>
        <dbReference type="ChEBI" id="CHEBI:33019"/>
        <dbReference type="ChEBI" id="CHEBI:33384"/>
        <dbReference type="ChEBI" id="CHEBI:78442"/>
        <dbReference type="ChEBI" id="CHEBI:78533"/>
        <dbReference type="ChEBI" id="CHEBI:456215"/>
        <dbReference type="EC" id="6.1.1.11"/>
    </reaction>
</comment>
<comment type="pathway">
    <text evidence="1">Aminoacyl-tRNA biosynthesis; selenocysteinyl-tRNA(Sec) biosynthesis; L-seryl-tRNA(Sec) from L-serine and tRNA(Sec): step 1/1.</text>
</comment>
<comment type="subunit">
    <text evidence="1">Homodimer. The tRNA molecule binds across the dimer.</text>
</comment>
<comment type="subcellular location">
    <subcellularLocation>
        <location evidence="1">Cytoplasm</location>
    </subcellularLocation>
</comment>
<comment type="domain">
    <text evidence="1">Consists of two distinct domains, a catalytic core and a N-terminal extension that is involved in tRNA binding.</text>
</comment>
<comment type="similarity">
    <text evidence="1">Belongs to the class-II aminoacyl-tRNA synthetase family. Type-1 seryl-tRNA synthetase subfamily.</text>
</comment>
<gene>
    <name evidence="1" type="primary">serS</name>
    <name type="ordered locus">CV_1375</name>
</gene>
<sequence length="427" mass="46992">MLDINLLRNDIEAVAARLAGRGYTLDTAAFNQLESERKSLQSRMQELQAKRNATSKQIGIAKGKGEDVSAILAEVATLGDELKAAEQAFDGVQGQLDAWLMSIPNLPHESVPVGKDENDNVEVRRVGVPRQFDFEVKDHVDVGAPLGLDFDTGAKLSGARFTVLKGDIARLHRAIAQFMLNTHTGSHGYQEHYTPYIVNDTALLGTGQLPKFADDMFKVTRGGDESAVPQYLISTSEVTLTNTVADTILQESELPKKMTAHSPCFRSEAGSYGRDTRGMIRQHQFDKVEMVRVEKPEHSYAALEEMVGHAENILKALELPYRVITLCTGDMGFGSAKTYDLEVWLPAQNTYREISSCSNCEAFQARRMKARYKDENGKNQLVHTLNGSGLAVGRTLVAILENYQNADGSVTVPTVLRPFMGKDRIGG</sequence>
<organism>
    <name type="scientific">Chromobacterium violaceum (strain ATCC 12472 / DSM 30191 / JCM 1249 / CCUG 213 / NBRC 12614 / NCIMB 9131 / NCTC 9757 / MK)</name>
    <dbReference type="NCBI Taxonomy" id="243365"/>
    <lineage>
        <taxon>Bacteria</taxon>
        <taxon>Pseudomonadati</taxon>
        <taxon>Pseudomonadota</taxon>
        <taxon>Betaproteobacteria</taxon>
        <taxon>Neisseriales</taxon>
        <taxon>Chromobacteriaceae</taxon>
        <taxon>Chromobacterium</taxon>
    </lineage>
</organism>
<keyword id="KW-0030">Aminoacyl-tRNA synthetase</keyword>
<keyword id="KW-0067">ATP-binding</keyword>
<keyword id="KW-0963">Cytoplasm</keyword>
<keyword id="KW-0436">Ligase</keyword>
<keyword id="KW-0547">Nucleotide-binding</keyword>
<keyword id="KW-0648">Protein biosynthesis</keyword>
<keyword id="KW-1185">Reference proteome</keyword>
<feature type="chain" id="PRO_0000122033" description="Serine--tRNA ligase">
    <location>
        <begin position="1"/>
        <end position="427"/>
    </location>
</feature>
<feature type="binding site" evidence="1">
    <location>
        <begin position="235"/>
        <end position="237"/>
    </location>
    <ligand>
        <name>L-serine</name>
        <dbReference type="ChEBI" id="CHEBI:33384"/>
    </ligand>
</feature>
<feature type="binding site" evidence="1">
    <location>
        <begin position="266"/>
        <end position="268"/>
    </location>
    <ligand>
        <name>ATP</name>
        <dbReference type="ChEBI" id="CHEBI:30616"/>
    </ligand>
</feature>
<feature type="binding site" evidence="1">
    <location>
        <position position="289"/>
    </location>
    <ligand>
        <name>L-serine</name>
        <dbReference type="ChEBI" id="CHEBI:33384"/>
    </ligand>
</feature>
<feature type="binding site" evidence="1">
    <location>
        <begin position="353"/>
        <end position="356"/>
    </location>
    <ligand>
        <name>ATP</name>
        <dbReference type="ChEBI" id="CHEBI:30616"/>
    </ligand>
</feature>
<feature type="binding site" evidence="1">
    <location>
        <position position="388"/>
    </location>
    <ligand>
        <name>L-serine</name>
        <dbReference type="ChEBI" id="CHEBI:33384"/>
    </ligand>
</feature>
<proteinExistence type="inferred from homology"/>
<dbReference type="EC" id="6.1.1.11" evidence="1"/>
<dbReference type="EMBL" id="AE016825">
    <property type="protein sequence ID" value="AAQ59050.1"/>
    <property type="molecule type" value="Genomic_DNA"/>
</dbReference>
<dbReference type="RefSeq" id="WP_011134929.1">
    <property type="nucleotide sequence ID" value="NC_005085.1"/>
</dbReference>
<dbReference type="SMR" id="Q7NY99"/>
<dbReference type="STRING" id="243365.CV_1375"/>
<dbReference type="KEGG" id="cvi:CV_1375"/>
<dbReference type="eggNOG" id="COG0172">
    <property type="taxonomic scope" value="Bacteria"/>
</dbReference>
<dbReference type="HOGENOM" id="CLU_023797_1_1_4"/>
<dbReference type="OrthoDB" id="9804647at2"/>
<dbReference type="UniPathway" id="UPA00906">
    <property type="reaction ID" value="UER00895"/>
</dbReference>
<dbReference type="Proteomes" id="UP000001424">
    <property type="component" value="Chromosome"/>
</dbReference>
<dbReference type="GO" id="GO:0005737">
    <property type="term" value="C:cytoplasm"/>
    <property type="evidence" value="ECO:0007669"/>
    <property type="project" value="UniProtKB-SubCell"/>
</dbReference>
<dbReference type="GO" id="GO:0005524">
    <property type="term" value="F:ATP binding"/>
    <property type="evidence" value="ECO:0007669"/>
    <property type="project" value="UniProtKB-UniRule"/>
</dbReference>
<dbReference type="GO" id="GO:0004828">
    <property type="term" value="F:serine-tRNA ligase activity"/>
    <property type="evidence" value="ECO:0007669"/>
    <property type="project" value="UniProtKB-UniRule"/>
</dbReference>
<dbReference type="GO" id="GO:0016260">
    <property type="term" value="P:selenocysteine biosynthetic process"/>
    <property type="evidence" value="ECO:0007669"/>
    <property type="project" value="UniProtKB-UniRule"/>
</dbReference>
<dbReference type="GO" id="GO:0006434">
    <property type="term" value="P:seryl-tRNA aminoacylation"/>
    <property type="evidence" value="ECO:0007669"/>
    <property type="project" value="UniProtKB-UniRule"/>
</dbReference>
<dbReference type="CDD" id="cd00770">
    <property type="entry name" value="SerRS_core"/>
    <property type="match status" value="1"/>
</dbReference>
<dbReference type="Gene3D" id="3.30.930.10">
    <property type="entry name" value="Bira Bifunctional Protein, Domain 2"/>
    <property type="match status" value="1"/>
</dbReference>
<dbReference type="Gene3D" id="1.10.287.40">
    <property type="entry name" value="Serine-tRNA synthetase, tRNA binding domain"/>
    <property type="match status" value="1"/>
</dbReference>
<dbReference type="HAMAP" id="MF_00176">
    <property type="entry name" value="Ser_tRNA_synth_type1"/>
    <property type="match status" value="1"/>
</dbReference>
<dbReference type="InterPro" id="IPR002314">
    <property type="entry name" value="aa-tRNA-synt_IIb"/>
</dbReference>
<dbReference type="InterPro" id="IPR006195">
    <property type="entry name" value="aa-tRNA-synth_II"/>
</dbReference>
<dbReference type="InterPro" id="IPR045864">
    <property type="entry name" value="aa-tRNA-synth_II/BPL/LPL"/>
</dbReference>
<dbReference type="InterPro" id="IPR002317">
    <property type="entry name" value="Ser-tRNA-ligase_type_1"/>
</dbReference>
<dbReference type="InterPro" id="IPR015866">
    <property type="entry name" value="Ser-tRNA-synth_1_N"/>
</dbReference>
<dbReference type="InterPro" id="IPR042103">
    <property type="entry name" value="SerRS_1_N_sf"/>
</dbReference>
<dbReference type="InterPro" id="IPR033729">
    <property type="entry name" value="SerRS_core"/>
</dbReference>
<dbReference type="InterPro" id="IPR010978">
    <property type="entry name" value="tRNA-bd_arm"/>
</dbReference>
<dbReference type="NCBIfam" id="TIGR00414">
    <property type="entry name" value="serS"/>
    <property type="match status" value="1"/>
</dbReference>
<dbReference type="PANTHER" id="PTHR43697:SF1">
    <property type="entry name" value="SERINE--TRNA LIGASE"/>
    <property type="match status" value="1"/>
</dbReference>
<dbReference type="PANTHER" id="PTHR43697">
    <property type="entry name" value="SERYL-TRNA SYNTHETASE"/>
    <property type="match status" value="1"/>
</dbReference>
<dbReference type="Pfam" id="PF02403">
    <property type="entry name" value="Seryl_tRNA_N"/>
    <property type="match status" value="1"/>
</dbReference>
<dbReference type="Pfam" id="PF00587">
    <property type="entry name" value="tRNA-synt_2b"/>
    <property type="match status" value="1"/>
</dbReference>
<dbReference type="PIRSF" id="PIRSF001529">
    <property type="entry name" value="Ser-tRNA-synth_IIa"/>
    <property type="match status" value="1"/>
</dbReference>
<dbReference type="PRINTS" id="PR00981">
    <property type="entry name" value="TRNASYNTHSER"/>
</dbReference>
<dbReference type="SUPFAM" id="SSF55681">
    <property type="entry name" value="Class II aaRS and biotin synthetases"/>
    <property type="match status" value="1"/>
</dbReference>
<dbReference type="SUPFAM" id="SSF46589">
    <property type="entry name" value="tRNA-binding arm"/>
    <property type="match status" value="1"/>
</dbReference>
<dbReference type="PROSITE" id="PS50862">
    <property type="entry name" value="AA_TRNA_LIGASE_II"/>
    <property type="match status" value="1"/>
</dbReference>
<accession>Q7NY99</accession>